<sequence>MHPGGKGHCGPPPGHGPGHCHEGHHPPGPGGPHPGHGPGHCPGGHHPPGHGGPSHGHGPGHCPGGHHPPGHGGPSHGHGPGHCGPHPGPHH</sequence>
<comment type="alternative products">
    <event type="alternative splicing"/>
    <isoform>
        <id>Q8K0G7-1</id>
        <name>1</name>
        <sequence type="displayed"/>
    </isoform>
    <isoform>
        <id>Q8K0G7-2</id>
        <name>2</name>
        <sequence type="described" ref="VSP_039349"/>
    </isoform>
</comment>
<comment type="sequence caution" evidence="3">
    <conflict type="miscellaneous discrepancy">
        <sequence resource="EMBL-CDS" id="BAB25594"/>
    </conflict>
    <text>Wrong choice of frame.</text>
</comment>
<comment type="sequence caution" evidence="3">
    <conflict type="miscellaneous discrepancy">
        <sequence resource="EMBL-CDS" id="BAB31507"/>
    </conflict>
    <text>Wrong choice of frame.</text>
</comment>
<evidence type="ECO:0000256" key="1">
    <source>
        <dbReference type="SAM" id="MobiDB-lite"/>
    </source>
</evidence>
<evidence type="ECO:0000303" key="2">
    <source>
    </source>
</evidence>
<evidence type="ECO:0000305" key="3"/>
<gene>
    <name type="primary">Phgr1</name>
</gene>
<feature type="chain" id="PRO_0000395030" description="Proline, histidine and glycine-rich protein 1">
    <location>
        <begin position="1"/>
        <end position="91"/>
    </location>
</feature>
<feature type="region of interest" description="Disordered" evidence="1">
    <location>
        <begin position="1"/>
        <end position="91"/>
    </location>
</feature>
<feature type="compositionally biased region" description="Gly residues" evidence="1">
    <location>
        <begin position="33"/>
        <end position="42"/>
    </location>
</feature>
<feature type="compositionally biased region" description="Gly residues" evidence="1">
    <location>
        <begin position="49"/>
        <end position="63"/>
    </location>
</feature>
<feature type="compositionally biased region" description="Gly residues" evidence="1">
    <location>
        <begin position="70"/>
        <end position="82"/>
    </location>
</feature>
<feature type="splice variant" id="VSP_039349" description="In isoform 2." evidence="2">
    <original>P</original>
    <variation>PGGHHPPGHGGPSHGHGPGHCP</variation>
    <location>
        <position position="63"/>
    </location>
</feature>
<keyword id="KW-0025">Alternative splicing</keyword>
<keyword id="KW-1185">Reference proteome</keyword>
<proteinExistence type="predicted"/>
<reference key="1">
    <citation type="journal article" date="2005" name="Science">
        <title>The transcriptional landscape of the mammalian genome.</title>
        <authorList>
            <person name="Carninci P."/>
            <person name="Kasukawa T."/>
            <person name="Katayama S."/>
            <person name="Gough J."/>
            <person name="Frith M.C."/>
            <person name="Maeda N."/>
            <person name="Oyama R."/>
            <person name="Ravasi T."/>
            <person name="Lenhard B."/>
            <person name="Wells C."/>
            <person name="Kodzius R."/>
            <person name="Shimokawa K."/>
            <person name="Bajic V.B."/>
            <person name="Brenner S.E."/>
            <person name="Batalov S."/>
            <person name="Forrest A.R."/>
            <person name="Zavolan M."/>
            <person name="Davis M.J."/>
            <person name="Wilming L.G."/>
            <person name="Aidinis V."/>
            <person name="Allen J.E."/>
            <person name="Ambesi-Impiombato A."/>
            <person name="Apweiler R."/>
            <person name="Aturaliya R.N."/>
            <person name="Bailey T.L."/>
            <person name="Bansal M."/>
            <person name="Baxter L."/>
            <person name="Beisel K.W."/>
            <person name="Bersano T."/>
            <person name="Bono H."/>
            <person name="Chalk A.M."/>
            <person name="Chiu K.P."/>
            <person name="Choudhary V."/>
            <person name="Christoffels A."/>
            <person name="Clutterbuck D.R."/>
            <person name="Crowe M.L."/>
            <person name="Dalla E."/>
            <person name="Dalrymple B.P."/>
            <person name="de Bono B."/>
            <person name="Della Gatta G."/>
            <person name="di Bernardo D."/>
            <person name="Down T."/>
            <person name="Engstrom P."/>
            <person name="Fagiolini M."/>
            <person name="Faulkner G."/>
            <person name="Fletcher C.F."/>
            <person name="Fukushima T."/>
            <person name="Furuno M."/>
            <person name="Futaki S."/>
            <person name="Gariboldi M."/>
            <person name="Georgii-Hemming P."/>
            <person name="Gingeras T.R."/>
            <person name="Gojobori T."/>
            <person name="Green R.E."/>
            <person name="Gustincich S."/>
            <person name="Harbers M."/>
            <person name="Hayashi Y."/>
            <person name="Hensch T.K."/>
            <person name="Hirokawa N."/>
            <person name="Hill D."/>
            <person name="Huminiecki L."/>
            <person name="Iacono M."/>
            <person name="Ikeo K."/>
            <person name="Iwama A."/>
            <person name="Ishikawa T."/>
            <person name="Jakt M."/>
            <person name="Kanapin A."/>
            <person name="Katoh M."/>
            <person name="Kawasawa Y."/>
            <person name="Kelso J."/>
            <person name="Kitamura H."/>
            <person name="Kitano H."/>
            <person name="Kollias G."/>
            <person name="Krishnan S.P."/>
            <person name="Kruger A."/>
            <person name="Kummerfeld S.K."/>
            <person name="Kurochkin I.V."/>
            <person name="Lareau L.F."/>
            <person name="Lazarevic D."/>
            <person name="Lipovich L."/>
            <person name="Liu J."/>
            <person name="Liuni S."/>
            <person name="McWilliam S."/>
            <person name="Madan Babu M."/>
            <person name="Madera M."/>
            <person name="Marchionni L."/>
            <person name="Matsuda H."/>
            <person name="Matsuzawa S."/>
            <person name="Miki H."/>
            <person name="Mignone F."/>
            <person name="Miyake S."/>
            <person name="Morris K."/>
            <person name="Mottagui-Tabar S."/>
            <person name="Mulder N."/>
            <person name="Nakano N."/>
            <person name="Nakauchi H."/>
            <person name="Ng P."/>
            <person name="Nilsson R."/>
            <person name="Nishiguchi S."/>
            <person name="Nishikawa S."/>
            <person name="Nori F."/>
            <person name="Ohara O."/>
            <person name="Okazaki Y."/>
            <person name="Orlando V."/>
            <person name="Pang K.C."/>
            <person name="Pavan W.J."/>
            <person name="Pavesi G."/>
            <person name="Pesole G."/>
            <person name="Petrovsky N."/>
            <person name="Piazza S."/>
            <person name="Reed J."/>
            <person name="Reid J.F."/>
            <person name="Ring B.Z."/>
            <person name="Ringwald M."/>
            <person name="Rost B."/>
            <person name="Ruan Y."/>
            <person name="Salzberg S.L."/>
            <person name="Sandelin A."/>
            <person name="Schneider C."/>
            <person name="Schoenbach C."/>
            <person name="Sekiguchi K."/>
            <person name="Semple C.A."/>
            <person name="Seno S."/>
            <person name="Sessa L."/>
            <person name="Sheng Y."/>
            <person name="Shibata Y."/>
            <person name="Shimada H."/>
            <person name="Shimada K."/>
            <person name="Silva D."/>
            <person name="Sinclair B."/>
            <person name="Sperling S."/>
            <person name="Stupka E."/>
            <person name="Sugiura K."/>
            <person name="Sultana R."/>
            <person name="Takenaka Y."/>
            <person name="Taki K."/>
            <person name="Tammoja K."/>
            <person name="Tan S.L."/>
            <person name="Tang S."/>
            <person name="Taylor M.S."/>
            <person name="Tegner J."/>
            <person name="Teichmann S.A."/>
            <person name="Ueda H.R."/>
            <person name="van Nimwegen E."/>
            <person name="Verardo R."/>
            <person name="Wei C.L."/>
            <person name="Yagi K."/>
            <person name="Yamanishi H."/>
            <person name="Zabarovsky E."/>
            <person name="Zhu S."/>
            <person name="Zimmer A."/>
            <person name="Hide W."/>
            <person name="Bult C."/>
            <person name="Grimmond S.M."/>
            <person name="Teasdale R.D."/>
            <person name="Liu E.T."/>
            <person name="Brusic V."/>
            <person name="Quackenbush J."/>
            <person name="Wahlestedt C."/>
            <person name="Mattick J.S."/>
            <person name="Hume D.A."/>
            <person name="Kai C."/>
            <person name="Sasaki D."/>
            <person name="Tomaru Y."/>
            <person name="Fukuda S."/>
            <person name="Kanamori-Katayama M."/>
            <person name="Suzuki M."/>
            <person name="Aoki J."/>
            <person name="Arakawa T."/>
            <person name="Iida J."/>
            <person name="Imamura K."/>
            <person name="Itoh M."/>
            <person name="Kato T."/>
            <person name="Kawaji H."/>
            <person name="Kawagashira N."/>
            <person name="Kawashima T."/>
            <person name="Kojima M."/>
            <person name="Kondo S."/>
            <person name="Konno H."/>
            <person name="Nakano K."/>
            <person name="Ninomiya N."/>
            <person name="Nishio T."/>
            <person name="Okada M."/>
            <person name="Plessy C."/>
            <person name="Shibata K."/>
            <person name="Shiraki T."/>
            <person name="Suzuki S."/>
            <person name="Tagami M."/>
            <person name="Waki K."/>
            <person name="Watahiki A."/>
            <person name="Okamura-Oho Y."/>
            <person name="Suzuki H."/>
            <person name="Kawai J."/>
            <person name="Hayashizaki Y."/>
        </authorList>
    </citation>
    <scope>NUCLEOTIDE SEQUENCE [LARGE SCALE MRNA] (ISOFORM 2)</scope>
    <source>
        <strain>C57BL/6J</strain>
        <tissue>Pancreas</tissue>
        <tissue>Small intestine</tissue>
    </source>
</reference>
<reference key="2">
    <citation type="journal article" date="2009" name="PLoS Biol.">
        <title>Lineage-specific biology revealed by a finished genome assembly of the mouse.</title>
        <authorList>
            <person name="Church D.M."/>
            <person name="Goodstadt L."/>
            <person name="Hillier L.W."/>
            <person name="Zody M.C."/>
            <person name="Goldstein S."/>
            <person name="She X."/>
            <person name="Bult C.J."/>
            <person name="Agarwala R."/>
            <person name="Cherry J.L."/>
            <person name="DiCuccio M."/>
            <person name="Hlavina W."/>
            <person name="Kapustin Y."/>
            <person name="Meric P."/>
            <person name="Maglott D."/>
            <person name="Birtle Z."/>
            <person name="Marques A.C."/>
            <person name="Graves T."/>
            <person name="Zhou S."/>
            <person name="Teague B."/>
            <person name="Potamousis K."/>
            <person name="Churas C."/>
            <person name="Place M."/>
            <person name="Herschleb J."/>
            <person name="Runnheim R."/>
            <person name="Forrest D."/>
            <person name="Amos-Landgraf J."/>
            <person name="Schwartz D.C."/>
            <person name="Cheng Z."/>
            <person name="Lindblad-Toh K."/>
            <person name="Eichler E.E."/>
            <person name="Ponting C.P."/>
        </authorList>
    </citation>
    <scope>NUCLEOTIDE SEQUENCE [LARGE SCALE GENOMIC DNA]</scope>
    <source>
        <strain>C57BL/6J</strain>
    </source>
</reference>
<reference key="3">
    <citation type="journal article" date="2004" name="Genome Res.">
        <title>The status, quality, and expansion of the NIH full-length cDNA project: the Mammalian Gene Collection (MGC).</title>
        <authorList>
            <consortium name="The MGC Project Team"/>
        </authorList>
    </citation>
    <scope>NUCLEOTIDE SEQUENCE [LARGE SCALE MRNA] (ISOFORM 1)</scope>
    <source>
        <strain>FVB/N</strain>
        <tissue>Colon</tissue>
    </source>
</reference>
<protein>
    <recommendedName>
        <fullName>Proline, histidine and glycine-rich protein 1</fullName>
    </recommendedName>
</protein>
<dbReference type="EMBL" id="AK008311">
    <property type="protein sequence ID" value="BAB25594.2"/>
    <property type="status" value="ALT_SEQ"/>
    <property type="molecule type" value="mRNA"/>
</dbReference>
<dbReference type="EMBL" id="AK019007">
    <property type="protein sequence ID" value="BAB31507.2"/>
    <property type="status" value="ALT_SEQ"/>
    <property type="molecule type" value="mRNA"/>
</dbReference>
<dbReference type="EMBL" id="AL772255">
    <property type="status" value="NOT_ANNOTATED_CDS"/>
    <property type="molecule type" value="Genomic_DNA"/>
</dbReference>
<dbReference type="EMBL" id="BC031454">
    <property type="protein sequence ID" value="AAH31454.1"/>
    <property type="molecule type" value="mRNA"/>
</dbReference>
<dbReference type="CCDS" id="CCDS57182.1">
    <molecule id="Q8K0G7-2"/>
</dbReference>
<dbReference type="RefSeq" id="NP_001139116.1">
    <molecule id="Q8K0G7-2"/>
    <property type="nucleotide sequence ID" value="NM_001145644.2"/>
</dbReference>
<dbReference type="STRING" id="10090.ENSMUSP00000135093"/>
<dbReference type="PaxDb" id="10090-ENSMUSP00000135093"/>
<dbReference type="Ensembl" id="ENSMUST00000130293.8">
    <molecule id="Q8K0G7-2"/>
    <property type="protein sequence ID" value="ENSMUSP00000135093.2"/>
    <property type="gene ID" value="ENSMUSG00000046804.16"/>
</dbReference>
<dbReference type="GeneID" id="53906"/>
<dbReference type="KEGG" id="mmu:53906"/>
<dbReference type="UCSC" id="uc033hpl.1">
    <molecule id="Q8K0G7-2"/>
    <property type="organism name" value="mouse"/>
</dbReference>
<dbReference type="AGR" id="MGI:1858382"/>
<dbReference type="CTD" id="644844"/>
<dbReference type="MGI" id="MGI:1858382">
    <property type="gene designation" value="Phgr1"/>
</dbReference>
<dbReference type="VEuPathDB" id="HostDB:ENSMUSG00000046804"/>
<dbReference type="GeneTree" id="ENSGT00950000186548"/>
<dbReference type="HOGENOM" id="CLU_2145037_0_0_1"/>
<dbReference type="InParanoid" id="Q8K0G7"/>
<dbReference type="OMA" id="HCIPGSG"/>
<dbReference type="BioGRID-ORCS" id="53906">
    <property type="hits" value="1 hit in 74 CRISPR screens"/>
</dbReference>
<dbReference type="ChiTaRS" id="Phgr1">
    <property type="organism name" value="mouse"/>
</dbReference>
<dbReference type="PRO" id="PR:Q8K0G7"/>
<dbReference type="Proteomes" id="UP000000589">
    <property type="component" value="Chromosome 2"/>
</dbReference>
<dbReference type="RNAct" id="Q8K0G7">
    <property type="molecule type" value="protein"/>
</dbReference>
<dbReference type="Bgee" id="ENSMUSG00000046804">
    <property type="expression patterns" value="Expressed in right colon and 34 other cell types or tissues"/>
</dbReference>
<dbReference type="ExpressionAtlas" id="Q8K0G7">
    <property type="expression patterns" value="baseline and differential"/>
</dbReference>
<accession>Q8K0G7</accession>
<accession>Q9CR74</accession>
<organism>
    <name type="scientific">Mus musculus</name>
    <name type="common">Mouse</name>
    <dbReference type="NCBI Taxonomy" id="10090"/>
    <lineage>
        <taxon>Eukaryota</taxon>
        <taxon>Metazoa</taxon>
        <taxon>Chordata</taxon>
        <taxon>Craniata</taxon>
        <taxon>Vertebrata</taxon>
        <taxon>Euteleostomi</taxon>
        <taxon>Mammalia</taxon>
        <taxon>Eutheria</taxon>
        <taxon>Euarchontoglires</taxon>
        <taxon>Glires</taxon>
        <taxon>Rodentia</taxon>
        <taxon>Myomorpha</taxon>
        <taxon>Muroidea</taxon>
        <taxon>Muridae</taxon>
        <taxon>Murinae</taxon>
        <taxon>Mus</taxon>
        <taxon>Mus</taxon>
    </lineage>
</organism>
<name>PHGR1_MOUSE</name>